<geneLocation type="non-photosynthetic plastid"/>
<feature type="chain" id="PRO_0000362885" description="ATP synthase subunit C, plastid">
    <location>
        <begin position="1"/>
        <end position="81"/>
    </location>
</feature>
<feature type="transmembrane region" description="Helical" evidence="1">
    <location>
        <begin position="3"/>
        <end position="23"/>
    </location>
</feature>
<feature type="transmembrane region" description="Helical" evidence="1">
    <location>
        <begin position="61"/>
        <end position="81"/>
    </location>
</feature>
<feature type="site" description="Reversibly protonated during proton transport" evidence="1">
    <location>
        <position position="61"/>
    </location>
</feature>
<sequence length="81" mass="7900">MNPLIPAASVIAAGLAVGLASIGPGIGQGTAAGQAVEGIARQPEAEGKIRGTLLSSPASMEALTIYGLVVALALSFANPFI</sequence>
<evidence type="ECO:0000255" key="1">
    <source>
        <dbReference type="HAMAP-Rule" id="MF_01396"/>
    </source>
</evidence>
<evidence type="ECO:0000305" key="2"/>
<comment type="function">
    <text evidence="1">F(1)F(0) ATP synthase produces ATP from ADP in the presence of a proton or sodium gradient. F-type ATPases consist of two structural domains, F(1) containing the extramembraneous catalytic core and F(0) containing the membrane proton channel, linked together by a central stalk and a peripheral stalk. During catalysis, ATP synthesis in the catalytic domain of F(1) is coupled via a rotary mechanism of the central stalk subunits to proton translocation.</text>
</comment>
<comment type="function">
    <text evidence="1">Key component of the F(0) channel; it plays a direct role in translocation across the membrane. A homomeric c-ring of between 10-14 subunits forms the central stalk rotor element with the F(1) delta and epsilon subunits.</text>
</comment>
<comment type="subunit">
    <text evidence="1">F-type ATPases have 2 components, F(1) - the catalytic core - and F(0) - the membrane proton channel. F(1) has five subunits: alpha(3), beta(3), gamma(1), delta(1), epsilon(1). F(0) has four main subunits: a(1), b(1), b'(1) and c(10-14). The alpha and beta chains form an alternating ring which encloses part of the gamma chain. F(1) is attached to F(0) by a central stalk formed by the gamma and epsilon chains, while a peripheral stalk is formed by the delta, b and b' chains.</text>
</comment>
<comment type="subcellular location">
    <subcellularLocation>
        <location evidence="2">Plastid membrane</location>
        <topology evidence="1">Multi-pass membrane protein</topology>
    </subcellularLocation>
</comment>
<comment type="miscellaneous">
    <text>In plastids the F-type ATPase is also known as CF(1)CF(0).</text>
</comment>
<comment type="similarity">
    <text evidence="1">Belongs to the ATPase C chain family.</text>
</comment>
<protein>
    <recommendedName>
        <fullName>ATP synthase subunit C, plastid</fullName>
    </recommendedName>
    <alternativeName>
        <fullName>ATP synthase F0 sector subunit C</fullName>
    </alternativeName>
    <alternativeName>
        <fullName evidence="1">ATPase subunit III</fullName>
    </alternativeName>
    <alternativeName>
        <fullName evidence="1">Lipid-binding protein</fullName>
    </alternativeName>
</protein>
<gene>
    <name evidence="1" type="primary">atpE</name>
    <name evidence="1" type="synonym">atpH</name>
</gene>
<organism>
    <name type="scientific">Aneura mirabilis</name>
    <name type="common">Parasitic liverwort</name>
    <name type="synonym">Cryptothallus mirabilis</name>
    <dbReference type="NCBI Taxonomy" id="280810"/>
    <lineage>
        <taxon>Eukaryota</taxon>
        <taxon>Viridiplantae</taxon>
        <taxon>Streptophyta</taxon>
        <taxon>Embryophyta</taxon>
        <taxon>Marchantiophyta</taxon>
        <taxon>Jungermanniopsida</taxon>
        <taxon>Metzgeriidae</taxon>
        <taxon>Metzgeriales</taxon>
        <taxon>Aneuraceae</taxon>
        <taxon>Aneura</taxon>
    </lineage>
</organism>
<name>ATPH_ANEMR</name>
<keyword id="KW-0066">ATP synthesis</keyword>
<keyword id="KW-0138">CF(0)</keyword>
<keyword id="KW-0375">Hydrogen ion transport</keyword>
<keyword id="KW-0406">Ion transport</keyword>
<keyword id="KW-0446">Lipid-binding</keyword>
<keyword id="KW-0472">Membrane</keyword>
<keyword id="KW-0934">Plastid</keyword>
<keyword id="KW-0812">Transmembrane</keyword>
<keyword id="KW-1133">Transmembrane helix</keyword>
<keyword id="KW-0813">Transport</keyword>
<dbReference type="EMBL" id="EU043314">
    <property type="protein sequence ID" value="ABS54470.1"/>
    <property type="molecule type" value="Genomic_DNA"/>
</dbReference>
<dbReference type="RefSeq" id="YP_001687209.1">
    <property type="nucleotide sequence ID" value="NC_010359.1"/>
</dbReference>
<dbReference type="SMR" id="B0YPM3"/>
<dbReference type="GeneID" id="5952198"/>
<dbReference type="GO" id="GO:0005886">
    <property type="term" value="C:plasma membrane"/>
    <property type="evidence" value="ECO:0007669"/>
    <property type="project" value="UniProtKB-UniRule"/>
</dbReference>
<dbReference type="GO" id="GO:0042170">
    <property type="term" value="C:plastid membrane"/>
    <property type="evidence" value="ECO:0007669"/>
    <property type="project" value="UniProtKB-SubCell"/>
</dbReference>
<dbReference type="GO" id="GO:0045259">
    <property type="term" value="C:proton-transporting ATP synthase complex"/>
    <property type="evidence" value="ECO:0007669"/>
    <property type="project" value="UniProtKB-KW"/>
</dbReference>
<dbReference type="GO" id="GO:0033177">
    <property type="term" value="C:proton-transporting two-sector ATPase complex, proton-transporting domain"/>
    <property type="evidence" value="ECO:0007669"/>
    <property type="project" value="InterPro"/>
</dbReference>
<dbReference type="GO" id="GO:0008289">
    <property type="term" value="F:lipid binding"/>
    <property type="evidence" value="ECO:0007669"/>
    <property type="project" value="UniProtKB-KW"/>
</dbReference>
<dbReference type="GO" id="GO:0046933">
    <property type="term" value="F:proton-transporting ATP synthase activity, rotational mechanism"/>
    <property type="evidence" value="ECO:0007669"/>
    <property type="project" value="UniProtKB-UniRule"/>
</dbReference>
<dbReference type="CDD" id="cd18183">
    <property type="entry name" value="ATP-synt_Fo_c_ATPH"/>
    <property type="match status" value="1"/>
</dbReference>
<dbReference type="FunFam" id="1.20.20.10:FF:000001">
    <property type="entry name" value="ATP synthase subunit c, chloroplastic"/>
    <property type="match status" value="1"/>
</dbReference>
<dbReference type="Gene3D" id="1.20.20.10">
    <property type="entry name" value="F1F0 ATP synthase subunit C"/>
    <property type="match status" value="1"/>
</dbReference>
<dbReference type="HAMAP" id="MF_01396">
    <property type="entry name" value="ATP_synth_c_bact"/>
    <property type="match status" value="1"/>
</dbReference>
<dbReference type="InterPro" id="IPR005953">
    <property type="entry name" value="ATP_synth_csu_bac/chlpt"/>
</dbReference>
<dbReference type="InterPro" id="IPR000454">
    <property type="entry name" value="ATP_synth_F0_csu"/>
</dbReference>
<dbReference type="InterPro" id="IPR038662">
    <property type="entry name" value="ATP_synth_F0_csu_sf"/>
</dbReference>
<dbReference type="InterPro" id="IPR002379">
    <property type="entry name" value="ATPase_proteolipid_c-like_dom"/>
</dbReference>
<dbReference type="InterPro" id="IPR035921">
    <property type="entry name" value="F/V-ATP_Csub_sf"/>
</dbReference>
<dbReference type="NCBIfam" id="TIGR01260">
    <property type="entry name" value="ATP_synt_c"/>
    <property type="match status" value="1"/>
</dbReference>
<dbReference type="NCBIfam" id="NF005608">
    <property type="entry name" value="PRK07354.1"/>
    <property type="match status" value="1"/>
</dbReference>
<dbReference type="PANTHER" id="PTHR10031">
    <property type="entry name" value="ATP SYNTHASE LIPID-BINDING PROTEIN, MITOCHONDRIAL"/>
    <property type="match status" value="1"/>
</dbReference>
<dbReference type="PANTHER" id="PTHR10031:SF0">
    <property type="entry name" value="ATPASE PROTEIN 9"/>
    <property type="match status" value="1"/>
</dbReference>
<dbReference type="Pfam" id="PF00137">
    <property type="entry name" value="ATP-synt_C"/>
    <property type="match status" value="1"/>
</dbReference>
<dbReference type="PRINTS" id="PR00124">
    <property type="entry name" value="ATPASEC"/>
</dbReference>
<dbReference type="SUPFAM" id="SSF81333">
    <property type="entry name" value="F1F0 ATP synthase subunit C"/>
    <property type="match status" value="1"/>
</dbReference>
<proteinExistence type="inferred from homology"/>
<accession>B0YPM3</accession>
<reference key="1">
    <citation type="journal article" date="2008" name="Mol. Biol. Evol.">
        <title>Functional gene losses occur with minimal size reduction in the plastid genome of the parasitic liverwort Aneura mirabilis.</title>
        <authorList>
            <person name="Wickett N.J."/>
            <person name="Zhang Y."/>
            <person name="Hansen S.K."/>
            <person name="Roper J.M."/>
            <person name="Kuehl J.V."/>
            <person name="Plock S.A."/>
            <person name="Wolf P.G."/>
            <person name="dePamphilis C.W."/>
            <person name="Boore J.L."/>
            <person name="Goffinet B."/>
        </authorList>
    </citation>
    <scope>NUCLEOTIDE SEQUENCE [LARGE SCALE GENOMIC DNA]</scope>
</reference>